<organism>
    <name type="scientific">Streptococcus suis (strain P1/7)</name>
    <dbReference type="NCBI Taxonomy" id="218494"/>
    <lineage>
        <taxon>Bacteria</taxon>
        <taxon>Bacillati</taxon>
        <taxon>Bacillota</taxon>
        <taxon>Bacilli</taxon>
        <taxon>Lactobacillales</taxon>
        <taxon>Streptococcaceae</taxon>
        <taxon>Streptococcus</taxon>
    </lineage>
</organism>
<protein>
    <recommendedName>
        <fullName evidence="1">Acetyl-coenzyme A carboxylase carboxyl transferase subunit beta</fullName>
        <shortName evidence="1">ACCase subunit beta</shortName>
        <shortName evidence="1">Acetyl-CoA carboxylase carboxyltransferase subunit beta</shortName>
        <ecNumber evidence="1">2.1.3.15</ecNumber>
    </recommendedName>
</protein>
<dbReference type="EC" id="2.1.3.15" evidence="1"/>
<dbReference type="EMBL" id="AM946016">
    <property type="protein sequence ID" value="CAR47295.1"/>
    <property type="molecule type" value="Genomic_DNA"/>
</dbReference>
<dbReference type="RefSeq" id="WP_012028463.1">
    <property type="nucleotide sequence ID" value="NC_012925.1"/>
</dbReference>
<dbReference type="SMR" id="C5VZW3"/>
<dbReference type="GeneID" id="8154761"/>
<dbReference type="KEGG" id="ssi:SSU1598"/>
<dbReference type="HOGENOM" id="CLU_015486_1_1_9"/>
<dbReference type="UniPathway" id="UPA00655">
    <property type="reaction ID" value="UER00711"/>
</dbReference>
<dbReference type="GO" id="GO:0009317">
    <property type="term" value="C:acetyl-CoA carboxylase complex"/>
    <property type="evidence" value="ECO:0007669"/>
    <property type="project" value="InterPro"/>
</dbReference>
<dbReference type="GO" id="GO:0003989">
    <property type="term" value="F:acetyl-CoA carboxylase activity"/>
    <property type="evidence" value="ECO:0007669"/>
    <property type="project" value="InterPro"/>
</dbReference>
<dbReference type="GO" id="GO:0005524">
    <property type="term" value="F:ATP binding"/>
    <property type="evidence" value="ECO:0007669"/>
    <property type="project" value="UniProtKB-KW"/>
</dbReference>
<dbReference type="GO" id="GO:0016743">
    <property type="term" value="F:carboxyl- or carbamoyltransferase activity"/>
    <property type="evidence" value="ECO:0007669"/>
    <property type="project" value="UniProtKB-UniRule"/>
</dbReference>
<dbReference type="GO" id="GO:0008270">
    <property type="term" value="F:zinc ion binding"/>
    <property type="evidence" value="ECO:0007669"/>
    <property type="project" value="UniProtKB-UniRule"/>
</dbReference>
<dbReference type="GO" id="GO:0006633">
    <property type="term" value="P:fatty acid biosynthetic process"/>
    <property type="evidence" value="ECO:0007669"/>
    <property type="project" value="UniProtKB-KW"/>
</dbReference>
<dbReference type="GO" id="GO:2001295">
    <property type="term" value="P:malonyl-CoA biosynthetic process"/>
    <property type="evidence" value="ECO:0007669"/>
    <property type="project" value="UniProtKB-UniRule"/>
</dbReference>
<dbReference type="Gene3D" id="3.90.226.10">
    <property type="entry name" value="2-enoyl-CoA Hydratase, Chain A, domain 1"/>
    <property type="match status" value="1"/>
</dbReference>
<dbReference type="HAMAP" id="MF_01395">
    <property type="entry name" value="AcetylCoA_CT_beta"/>
    <property type="match status" value="1"/>
</dbReference>
<dbReference type="InterPro" id="IPR034733">
    <property type="entry name" value="AcCoA_carboxyl_beta"/>
</dbReference>
<dbReference type="InterPro" id="IPR000438">
    <property type="entry name" value="Acetyl_CoA_COase_Trfase_b_su"/>
</dbReference>
<dbReference type="InterPro" id="IPR029045">
    <property type="entry name" value="ClpP/crotonase-like_dom_sf"/>
</dbReference>
<dbReference type="InterPro" id="IPR011762">
    <property type="entry name" value="COA_CT_N"/>
</dbReference>
<dbReference type="NCBIfam" id="TIGR00515">
    <property type="entry name" value="accD"/>
    <property type="match status" value="1"/>
</dbReference>
<dbReference type="PANTHER" id="PTHR42995">
    <property type="entry name" value="ACETYL-COENZYME A CARBOXYLASE CARBOXYL TRANSFERASE SUBUNIT BETA, CHLOROPLASTIC"/>
    <property type="match status" value="1"/>
</dbReference>
<dbReference type="PANTHER" id="PTHR42995:SF5">
    <property type="entry name" value="ACETYL-COENZYME A CARBOXYLASE CARBOXYL TRANSFERASE SUBUNIT BETA, CHLOROPLASTIC"/>
    <property type="match status" value="1"/>
</dbReference>
<dbReference type="Pfam" id="PF01039">
    <property type="entry name" value="Carboxyl_trans"/>
    <property type="match status" value="1"/>
</dbReference>
<dbReference type="PRINTS" id="PR01070">
    <property type="entry name" value="ACCCTRFRASEB"/>
</dbReference>
<dbReference type="SUPFAM" id="SSF52096">
    <property type="entry name" value="ClpP/crotonase"/>
    <property type="match status" value="1"/>
</dbReference>
<dbReference type="PROSITE" id="PS50980">
    <property type="entry name" value="COA_CT_NTER"/>
    <property type="match status" value="1"/>
</dbReference>
<reference key="1">
    <citation type="journal article" date="2009" name="PLoS ONE">
        <title>Rapid evolution of virulence and drug resistance in the emerging zoonotic pathogen Streptococcus suis.</title>
        <authorList>
            <person name="Holden M.T.G."/>
            <person name="Hauser H."/>
            <person name="Sanders M."/>
            <person name="Ngo T.H."/>
            <person name="Cherevach I."/>
            <person name="Cronin A."/>
            <person name="Goodhead I."/>
            <person name="Mungall K."/>
            <person name="Quail M.A."/>
            <person name="Price C."/>
            <person name="Rabbinowitsch E."/>
            <person name="Sharp S."/>
            <person name="Croucher N.J."/>
            <person name="Chieu T.B."/>
            <person name="Mai N.T.H."/>
            <person name="Diep T.S."/>
            <person name="Chinh N.T."/>
            <person name="Kehoe M."/>
            <person name="Leigh J.A."/>
            <person name="Ward P.N."/>
            <person name="Dowson C.G."/>
            <person name="Whatmore A.M."/>
            <person name="Chanter N."/>
            <person name="Iversen P."/>
            <person name="Gottschalk M."/>
            <person name="Slater J.D."/>
            <person name="Smith H.E."/>
            <person name="Spratt B.G."/>
            <person name="Xu J."/>
            <person name="Ye C."/>
            <person name="Bentley S."/>
            <person name="Barrell B.G."/>
            <person name="Schultsz C."/>
            <person name="Maskell D.J."/>
            <person name="Parkhill J."/>
        </authorList>
    </citation>
    <scope>NUCLEOTIDE SEQUENCE [LARGE SCALE GENOMIC DNA]</scope>
    <source>
        <strain>P1/7</strain>
    </source>
</reference>
<accession>C5VZW3</accession>
<gene>
    <name evidence="1" type="primary">accD</name>
    <name type="ordered locus">SSU1598</name>
</gene>
<proteinExistence type="inferred from homology"/>
<name>ACCD_STRSE</name>
<sequence>MALFRKKDKYIRINPNRSRIESAPQAKPEVPDELFSKCPACKVILYKNDLGLEKTCQHCSYNFRITAQERRALTVDEGSFEELFTGIETTNPLDFPNYLEKLAATRQKTGLDEAVLTGKATIGGQPVALGIMDSHFIMASMGTVVGEKITRLFELAIEERLPVVLFTASGGARMQEGIMSLMQMAKISAAVKRHSNAGLFYLTVLTDPTTGGVTASFAMEGDIILAEPQTLVGFAGRRVIESTVRENLPDDFQKAEFLQEHGFVDAIVKRQDLPATISRLLRMHGGVR</sequence>
<keyword id="KW-0067">ATP-binding</keyword>
<keyword id="KW-0963">Cytoplasm</keyword>
<keyword id="KW-0275">Fatty acid biosynthesis</keyword>
<keyword id="KW-0276">Fatty acid metabolism</keyword>
<keyword id="KW-0444">Lipid biosynthesis</keyword>
<keyword id="KW-0443">Lipid metabolism</keyword>
<keyword id="KW-0479">Metal-binding</keyword>
<keyword id="KW-0547">Nucleotide-binding</keyword>
<keyword id="KW-0808">Transferase</keyword>
<keyword id="KW-0862">Zinc</keyword>
<keyword id="KW-0863">Zinc-finger</keyword>
<comment type="function">
    <text evidence="1">Component of the acetyl coenzyme A carboxylase (ACC) complex. Biotin carboxylase (BC) catalyzes the carboxylation of biotin on its carrier protein (BCCP) and then the CO(2) group is transferred by the transcarboxylase to acetyl-CoA to form malonyl-CoA.</text>
</comment>
<comment type="catalytic activity">
    <reaction evidence="1">
        <text>N(6)-carboxybiotinyl-L-lysyl-[protein] + acetyl-CoA = N(6)-biotinyl-L-lysyl-[protein] + malonyl-CoA</text>
        <dbReference type="Rhea" id="RHEA:54728"/>
        <dbReference type="Rhea" id="RHEA-COMP:10505"/>
        <dbReference type="Rhea" id="RHEA-COMP:10506"/>
        <dbReference type="ChEBI" id="CHEBI:57288"/>
        <dbReference type="ChEBI" id="CHEBI:57384"/>
        <dbReference type="ChEBI" id="CHEBI:83144"/>
        <dbReference type="ChEBI" id="CHEBI:83145"/>
        <dbReference type="EC" id="2.1.3.15"/>
    </reaction>
</comment>
<comment type="cofactor">
    <cofactor evidence="1">
        <name>Zn(2+)</name>
        <dbReference type="ChEBI" id="CHEBI:29105"/>
    </cofactor>
    <text evidence="1">Binds 1 zinc ion per subunit.</text>
</comment>
<comment type="pathway">
    <text evidence="1">Lipid metabolism; malonyl-CoA biosynthesis; malonyl-CoA from acetyl-CoA: step 1/1.</text>
</comment>
<comment type="subunit">
    <text evidence="1">Acetyl-CoA carboxylase is a heterohexamer composed of biotin carboxyl carrier protein (AccB), biotin carboxylase (AccC) and two subunits each of ACCase subunit alpha (AccA) and ACCase subunit beta (AccD).</text>
</comment>
<comment type="subcellular location">
    <subcellularLocation>
        <location evidence="1">Cytoplasm</location>
    </subcellularLocation>
</comment>
<comment type="similarity">
    <text evidence="1">Belongs to the AccD/PCCB family.</text>
</comment>
<evidence type="ECO:0000255" key="1">
    <source>
        <dbReference type="HAMAP-Rule" id="MF_01395"/>
    </source>
</evidence>
<evidence type="ECO:0000255" key="2">
    <source>
        <dbReference type="PROSITE-ProRule" id="PRU01136"/>
    </source>
</evidence>
<feature type="chain" id="PRO_0000389887" description="Acetyl-coenzyme A carboxylase carboxyl transferase subunit beta">
    <location>
        <begin position="1"/>
        <end position="288"/>
    </location>
</feature>
<feature type="domain" description="CoA carboxyltransferase N-terminal" evidence="2">
    <location>
        <begin position="34"/>
        <end position="288"/>
    </location>
</feature>
<feature type="zinc finger region" description="C4-type" evidence="1">
    <location>
        <begin position="38"/>
        <end position="59"/>
    </location>
</feature>
<feature type="binding site" evidence="1">
    <location>
        <position position="38"/>
    </location>
    <ligand>
        <name>Zn(2+)</name>
        <dbReference type="ChEBI" id="CHEBI:29105"/>
    </ligand>
</feature>
<feature type="binding site" evidence="1">
    <location>
        <position position="41"/>
    </location>
    <ligand>
        <name>Zn(2+)</name>
        <dbReference type="ChEBI" id="CHEBI:29105"/>
    </ligand>
</feature>
<feature type="binding site" evidence="1">
    <location>
        <position position="56"/>
    </location>
    <ligand>
        <name>Zn(2+)</name>
        <dbReference type="ChEBI" id="CHEBI:29105"/>
    </ligand>
</feature>
<feature type="binding site" evidence="1">
    <location>
        <position position="59"/>
    </location>
    <ligand>
        <name>Zn(2+)</name>
        <dbReference type="ChEBI" id="CHEBI:29105"/>
    </ligand>
</feature>